<protein>
    <recommendedName>
        <fullName evidence="1">Protein PsbN</fullName>
    </recommendedName>
</protein>
<name>PSBN_FAGEA</name>
<geneLocation type="chloroplast"/>
<gene>
    <name evidence="1" type="primary">psbN</name>
</gene>
<accession>B2XWQ1</accession>
<evidence type="ECO:0000255" key="1">
    <source>
        <dbReference type="HAMAP-Rule" id="MF_00293"/>
    </source>
</evidence>
<sequence length="43" mass="4722">METATLVAIFISGLLVSFTGYALYTAFGQPSQQLRDPFEEHGD</sequence>
<dbReference type="EMBL" id="EU254477">
    <property type="protein sequence ID" value="ABY79760.1"/>
    <property type="molecule type" value="Genomic_DNA"/>
</dbReference>
<dbReference type="RefSeq" id="YP_001936545.1">
    <property type="nucleotide sequence ID" value="NC_010776.1"/>
</dbReference>
<dbReference type="SMR" id="B2XWQ1"/>
<dbReference type="GeneID" id="6335963"/>
<dbReference type="GO" id="GO:0009535">
    <property type="term" value="C:chloroplast thylakoid membrane"/>
    <property type="evidence" value="ECO:0007669"/>
    <property type="project" value="UniProtKB-SubCell"/>
</dbReference>
<dbReference type="GO" id="GO:0015979">
    <property type="term" value="P:photosynthesis"/>
    <property type="evidence" value="ECO:0007669"/>
    <property type="project" value="InterPro"/>
</dbReference>
<dbReference type="HAMAP" id="MF_00293">
    <property type="entry name" value="PSII_PsbN"/>
    <property type="match status" value="1"/>
</dbReference>
<dbReference type="InterPro" id="IPR003398">
    <property type="entry name" value="PSII_PsbN"/>
</dbReference>
<dbReference type="PANTHER" id="PTHR35326">
    <property type="entry name" value="PROTEIN PSBN"/>
    <property type="match status" value="1"/>
</dbReference>
<dbReference type="PANTHER" id="PTHR35326:SF3">
    <property type="entry name" value="PROTEIN PSBN"/>
    <property type="match status" value="1"/>
</dbReference>
<dbReference type="Pfam" id="PF02468">
    <property type="entry name" value="PsbN"/>
    <property type="match status" value="1"/>
</dbReference>
<reference key="1">
    <citation type="journal article" date="2008" name="BMC Plant Biol.">
        <title>Comparative chloroplast genomics and phylogenetics of Fagopyrum esculentum ssp. ancestrale - a wild ancestor of cultivated buckwheat.</title>
        <authorList>
            <person name="Logacheva M.D."/>
            <person name="Samigullin T.H."/>
            <person name="Dhingra A."/>
            <person name="Penin A.A."/>
        </authorList>
    </citation>
    <scope>NUCLEOTIDE SEQUENCE [LARGE SCALE GENOMIC DNA]</scope>
</reference>
<proteinExistence type="inferred from homology"/>
<organism>
    <name type="scientific">Fagopyrum esculentum subsp. ancestrale</name>
    <name type="common">Wild buckwheat</name>
    <dbReference type="NCBI Taxonomy" id="180217"/>
    <lineage>
        <taxon>Eukaryota</taxon>
        <taxon>Viridiplantae</taxon>
        <taxon>Streptophyta</taxon>
        <taxon>Embryophyta</taxon>
        <taxon>Tracheophyta</taxon>
        <taxon>Spermatophyta</taxon>
        <taxon>Magnoliopsida</taxon>
        <taxon>eudicotyledons</taxon>
        <taxon>Gunneridae</taxon>
        <taxon>Pentapetalae</taxon>
        <taxon>Caryophyllales</taxon>
        <taxon>Polygonaceae</taxon>
        <taxon>Polygonoideae</taxon>
        <taxon>Fagopyreae</taxon>
        <taxon>Fagopyrum</taxon>
    </lineage>
</organism>
<feature type="chain" id="PRO_0000362193" description="Protein PsbN">
    <location>
        <begin position="1"/>
        <end position="43"/>
    </location>
</feature>
<feature type="transmembrane region" description="Helical" evidence="1">
    <location>
        <begin position="7"/>
        <end position="27"/>
    </location>
</feature>
<comment type="function">
    <text evidence="1">May play a role in photosystem I and II biogenesis.</text>
</comment>
<comment type="subcellular location">
    <subcellularLocation>
        <location evidence="1">Plastid</location>
        <location evidence="1">Chloroplast thylakoid membrane</location>
        <topology evidence="1">Single-pass membrane protein</topology>
    </subcellularLocation>
</comment>
<comment type="similarity">
    <text evidence="1">Belongs to the PsbN family.</text>
</comment>
<comment type="caution">
    <text evidence="1">Originally thought to be a component of PSII; based on experiments in Synechocystis, N.tabacum and barley, and its absence from PSII in T.elongatus and T.vulcanus, this is probably not true.</text>
</comment>
<keyword id="KW-0150">Chloroplast</keyword>
<keyword id="KW-0472">Membrane</keyword>
<keyword id="KW-0934">Plastid</keyword>
<keyword id="KW-0793">Thylakoid</keyword>
<keyword id="KW-0812">Transmembrane</keyword>
<keyword id="KW-1133">Transmembrane helix</keyword>